<accession>Q8I2J4</accession>
<reference key="1">
    <citation type="journal article" date="2002" name="Nature">
        <title>Genome sequence of the human malaria parasite Plasmodium falciparum.</title>
        <authorList>
            <person name="Gardner M.J."/>
            <person name="Hall N."/>
            <person name="Fung E."/>
            <person name="White O."/>
            <person name="Berriman M."/>
            <person name="Hyman R.W."/>
            <person name="Carlton J.M."/>
            <person name="Pain A."/>
            <person name="Nelson K.E."/>
            <person name="Bowman S."/>
            <person name="Paulsen I.T."/>
            <person name="James K.D."/>
            <person name="Eisen J.A."/>
            <person name="Rutherford K.M."/>
            <person name="Salzberg S.L."/>
            <person name="Craig A."/>
            <person name="Kyes S."/>
            <person name="Chan M.-S."/>
            <person name="Nene V."/>
            <person name="Shallom S.J."/>
            <person name="Suh B."/>
            <person name="Peterson J."/>
            <person name="Angiuoli S."/>
            <person name="Pertea M."/>
            <person name="Allen J."/>
            <person name="Selengut J."/>
            <person name="Haft D."/>
            <person name="Mather M.W."/>
            <person name="Vaidya A.B."/>
            <person name="Martin D.M.A."/>
            <person name="Fairlamb A.H."/>
            <person name="Fraunholz M.J."/>
            <person name="Roos D.S."/>
            <person name="Ralph S.A."/>
            <person name="McFadden G.I."/>
            <person name="Cummings L.M."/>
            <person name="Subramanian G.M."/>
            <person name="Mungall C."/>
            <person name="Venter J.C."/>
            <person name="Carucci D.J."/>
            <person name="Hoffman S.L."/>
            <person name="Newbold C."/>
            <person name="Davis R.W."/>
            <person name="Fraser C.M."/>
            <person name="Barrell B.G."/>
        </authorList>
    </citation>
    <scope>NUCLEOTIDE SEQUENCE [LARGE SCALE GENOMIC DNA]</scope>
    <source>
        <strain>3D7</strain>
    </source>
</reference>
<reference evidence="5" key="2">
    <citation type="journal article" date="2002" name="Nature">
        <title>Sequence of Plasmodium falciparum chromosomes 1, 3-9 and 13.</title>
        <authorList>
            <person name="Hall N."/>
            <person name="Pain A."/>
            <person name="Berriman M."/>
            <person name="Churcher C.M."/>
            <person name="Harris B."/>
            <person name="Harris D."/>
            <person name="Mungall K.L."/>
            <person name="Bowman S."/>
            <person name="Atkin R."/>
            <person name="Baker S."/>
            <person name="Barron A."/>
            <person name="Brooks K."/>
            <person name="Buckee C.O."/>
            <person name="Burrows C."/>
            <person name="Cherevach I."/>
            <person name="Chillingworth C."/>
            <person name="Chillingworth T."/>
            <person name="Christodoulou Z."/>
            <person name="Clark L."/>
            <person name="Clark R."/>
            <person name="Corton C."/>
            <person name="Cronin A."/>
            <person name="Davies R.M."/>
            <person name="Davis P."/>
            <person name="Dear P."/>
            <person name="Dearden F."/>
            <person name="Doggett J."/>
            <person name="Feltwell T."/>
            <person name="Goble A."/>
            <person name="Goodhead I."/>
            <person name="Gwilliam R."/>
            <person name="Hamlin N."/>
            <person name="Hance Z."/>
            <person name="Harper D."/>
            <person name="Hauser H."/>
            <person name="Hornsby T."/>
            <person name="Holroyd S."/>
            <person name="Horrocks P."/>
            <person name="Humphray S."/>
            <person name="Jagels K."/>
            <person name="James K.D."/>
            <person name="Johnson D."/>
            <person name="Kerhornou A."/>
            <person name="Knights A."/>
            <person name="Konfortov B."/>
            <person name="Kyes S."/>
            <person name="Larke N."/>
            <person name="Lawson D."/>
            <person name="Lennard N."/>
            <person name="Line A."/>
            <person name="Maddison M."/>
            <person name="Mclean J."/>
            <person name="Mooney P."/>
            <person name="Moule S."/>
            <person name="Murphy L."/>
            <person name="Oliver K."/>
            <person name="Ormond D."/>
            <person name="Price C."/>
            <person name="Quail M.A."/>
            <person name="Rabbinowitsch E."/>
            <person name="Rajandream M.A."/>
            <person name="Rutter S."/>
            <person name="Rutherford K.M."/>
            <person name="Sanders M."/>
            <person name="Simmonds M."/>
            <person name="Seeger K."/>
            <person name="Sharp S."/>
            <person name="Smith R."/>
            <person name="Squares R."/>
            <person name="Squares S."/>
            <person name="Stevens K."/>
            <person name="Taylor K."/>
            <person name="Tivey A."/>
            <person name="Unwin L."/>
            <person name="Whitehead S."/>
            <person name="Woodward J.R."/>
            <person name="Sulston J.E."/>
            <person name="Craig A."/>
            <person name="Newbold C."/>
            <person name="Barrell B.G."/>
        </authorList>
    </citation>
    <scope>NUCLEOTIDE SEQUENCE [LARGE SCALE GENOMIC DNA]</scope>
    <source>
        <strain>3D7</strain>
    </source>
</reference>
<comment type="function">
    <text evidence="3">Essential for the invasive blood stages of the parasite. Binds to proline rich sequences in various regulatory formin-like proteins and also to membrane phospholipids. Binds to actin and affects the structure of the cytoskeleton. Weakly sequesters actin monomers (By similarity).</text>
</comment>
<comment type="subunit">
    <text evidence="1">Binds actin.</text>
</comment>
<comment type="subcellular location">
    <subcellularLocation>
        <location evidence="2">Cytoplasm</location>
        <location evidence="2">Cytoskeleton</location>
    </subcellularLocation>
</comment>
<comment type="domain">
    <text>The actin binding residues are poorly conserved between Plasmodium and other organisms. The Plasmodium-specific profilin mini-domain may have a role in binding to membrane phospholipids.</text>
</comment>
<comment type="similarity">
    <text evidence="4">Belongs to the profilin family.</text>
</comment>
<organism>
    <name type="scientific">Plasmodium falciparum (isolate 3D7)</name>
    <dbReference type="NCBI Taxonomy" id="36329"/>
    <lineage>
        <taxon>Eukaryota</taxon>
        <taxon>Sar</taxon>
        <taxon>Alveolata</taxon>
        <taxon>Apicomplexa</taxon>
        <taxon>Aconoidasida</taxon>
        <taxon>Haemosporida</taxon>
        <taxon>Plasmodiidae</taxon>
        <taxon>Plasmodium</taxon>
        <taxon>Plasmodium (Laverania)</taxon>
    </lineage>
</organism>
<evidence type="ECO:0000250" key="1"/>
<evidence type="ECO:0000250" key="2">
    <source>
        <dbReference type="UniProtKB" id="P07274"/>
    </source>
</evidence>
<evidence type="ECO:0000250" key="3">
    <source>
        <dbReference type="UniProtKB" id="P86294"/>
    </source>
</evidence>
<evidence type="ECO:0000255" key="4"/>
<evidence type="ECO:0000312" key="5">
    <source>
        <dbReference type="EMBL" id="CAD51999.1"/>
    </source>
</evidence>
<name>PROF_PLAF7</name>
<dbReference type="EMBL" id="AL844508">
    <property type="protein sequence ID" value="CAD51999.1"/>
    <property type="molecule type" value="Genomic_DNA"/>
</dbReference>
<dbReference type="RefSeq" id="XP_001352188.1">
    <property type="nucleotide sequence ID" value="XM_001352152.1"/>
</dbReference>
<dbReference type="SMR" id="Q8I2J4"/>
<dbReference type="DIP" id="DIP-46330N"/>
<dbReference type="FunCoup" id="Q8I2J4">
    <property type="interactions" value="7"/>
</dbReference>
<dbReference type="IntAct" id="Q8I2J4">
    <property type="interactions" value="1"/>
</dbReference>
<dbReference type="STRING" id="36329.Q8I2J4"/>
<dbReference type="PaxDb" id="5833-PFI1565w"/>
<dbReference type="EnsemblProtists" id="CAD51999">
    <property type="protein sequence ID" value="CAD51999"/>
    <property type="gene ID" value="PF3D7_0932200"/>
</dbReference>
<dbReference type="KEGG" id="pfa:PF3D7_0932200"/>
<dbReference type="VEuPathDB" id="PlasmoDB:PF3D7_0932200"/>
<dbReference type="HOGENOM" id="CLU_1630415_0_0_1"/>
<dbReference type="InParanoid" id="Q8I2J4"/>
<dbReference type="OMA" id="DKWTLFY"/>
<dbReference type="OrthoDB" id="421374at2759"/>
<dbReference type="PhylomeDB" id="Q8I2J4"/>
<dbReference type="EvolutionaryTrace" id="Q8I2J4"/>
<dbReference type="Proteomes" id="UP000001450">
    <property type="component" value="Chromosome 9"/>
</dbReference>
<dbReference type="GO" id="GO:0015629">
    <property type="term" value="C:actin cytoskeleton"/>
    <property type="evidence" value="ECO:0000250"/>
    <property type="project" value="UniProtKB"/>
</dbReference>
<dbReference type="GO" id="GO:0005938">
    <property type="term" value="C:cell cortex"/>
    <property type="evidence" value="ECO:0000318"/>
    <property type="project" value="GO_Central"/>
</dbReference>
<dbReference type="GO" id="GO:0003785">
    <property type="term" value="F:actin monomer binding"/>
    <property type="evidence" value="ECO:0000250"/>
    <property type="project" value="UniProtKB"/>
</dbReference>
<dbReference type="GO" id="GO:0005543">
    <property type="term" value="F:phospholipid binding"/>
    <property type="evidence" value="ECO:0000250"/>
    <property type="project" value="UniProtKB"/>
</dbReference>
<dbReference type="GO" id="GO:0030036">
    <property type="term" value="P:actin cytoskeleton organization"/>
    <property type="evidence" value="ECO:0000250"/>
    <property type="project" value="UniProtKB"/>
</dbReference>
<dbReference type="GO" id="GO:0060327">
    <property type="term" value="P:cytoplasmic actin-based contraction involved in cell motility"/>
    <property type="evidence" value="ECO:0000250"/>
    <property type="project" value="UniProtKB"/>
</dbReference>
<dbReference type="FunFam" id="3.30.450.30:FF:000016">
    <property type="entry name" value="Profilin"/>
    <property type="match status" value="1"/>
</dbReference>
<dbReference type="Gene3D" id="3.30.450.30">
    <property type="entry name" value="Dynein light chain 2a, cytoplasmic"/>
    <property type="match status" value="1"/>
</dbReference>
<dbReference type="InterPro" id="IPR048278">
    <property type="entry name" value="PFN"/>
</dbReference>
<dbReference type="InterPro" id="IPR005455">
    <property type="entry name" value="PFN_euk"/>
</dbReference>
<dbReference type="InterPro" id="IPR036140">
    <property type="entry name" value="PFN_sf"/>
</dbReference>
<dbReference type="InterPro" id="IPR016814">
    <property type="entry name" value="Profilin_apicomplexa"/>
</dbReference>
<dbReference type="Pfam" id="PF00235">
    <property type="entry name" value="Profilin"/>
    <property type="match status" value="1"/>
</dbReference>
<dbReference type="PIRSF" id="PIRSF022993">
    <property type="entry name" value="Profilin_apicomplexa"/>
    <property type="match status" value="1"/>
</dbReference>
<dbReference type="SMART" id="SM00392">
    <property type="entry name" value="PROF"/>
    <property type="match status" value="1"/>
</dbReference>
<dbReference type="SUPFAM" id="SSF55770">
    <property type="entry name" value="Profilin (actin-binding protein)"/>
    <property type="match status" value="1"/>
</dbReference>
<feature type="chain" id="PRO_0000377711" description="Profilin">
    <location>
        <begin position="1"/>
        <end position="171"/>
    </location>
</feature>
<feature type="region of interest" description="Pro-rich sequence-binding" evidence="3">
    <location>
        <begin position="5"/>
        <end position="10"/>
    </location>
</feature>
<feature type="region of interest" description="Actin-binding" evidence="3 4">
    <location>
        <begin position="100"/>
        <end position="112"/>
    </location>
</feature>
<feature type="region of interest" description="Actin-binding" evidence="3 4">
    <location>
        <begin position="152"/>
        <end position="156"/>
    </location>
</feature>
<feature type="short sequence motif" description="Plasmodium-specific profilin mini-domain" evidence="3">
    <location>
        <begin position="48"/>
        <end position="54"/>
    </location>
</feature>
<feature type="site" description="Interaction with Pro-rich sequence" evidence="1">
    <location>
        <position position="35"/>
    </location>
</feature>
<feature type="site" description="Interaction with actin" evidence="4">
    <location>
        <position position="89"/>
    </location>
</feature>
<gene>
    <name evidence="5" type="primary">Pfn</name>
    <name type="ORF">PFI1565w</name>
</gene>
<proteinExistence type="inferred from homology"/>
<sequence>MAEEYSWDSYLNDRLLATNQVSGAGLASEEDGVVYACVAQGEESDPNFDKWSLFYKEDYDIEVEDENGTKTTKTINEGQTILVVFNEGYAPDGVWLGGTKYQFINIERDLEFEGYNFDVATCAKLKGGLHLVKVPGGNILVVLYDEEKEQDRGNSKIAALTFAKELAESSQ</sequence>
<keyword id="KW-0009">Actin-binding</keyword>
<keyword id="KW-0963">Cytoplasm</keyword>
<keyword id="KW-0206">Cytoskeleton</keyword>
<keyword id="KW-0446">Lipid-binding</keyword>
<keyword id="KW-1185">Reference proteome</keyword>
<protein>
    <recommendedName>
        <fullName evidence="3">Profilin</fullName>
    </recommendedName>
</protein>